<proteinExistence type="evidence at transcript level"/>
<dbReference type="EC" id="2.4.2.8" evidence="2"/>
<dbReference type="EMBL" id="J00060">
    <property type="protein sequence ID" value="AAA36990.1"/>
    <property type="molecule type" value="mRNA"/>
</dbReference>
<dbReference type="EMBL" id="X53073">
    <property type="protein sequence ID" value="CAA37247.1"/>
    <property type="molecule type" value="Genomic_DNA"/>
</dbReference>
<dbReference type="EMBL" id="X53074">
    <property type="protein sequence ID" value="CAA37247.1"/>
    <property type="status" value="JOINED"/>
    <property type="molecule type" value="Genomic_DNA"/>
</dbReference>
<dbReference type="EMBL" id="X53075">
    <property type="protein sequence ID" value="CAA37247.1"/>
    <property type="status" value="JOINED"/>
    <property type="molecule type" value="Genomic_DNA"/>
</dbReference>
<dbReference type="EMBL" id="X53076">
    <property type="protein sequence ID" value="CAA37247.1"/>
    <property type="status" value="JOINED"/>
    <property type="molecule type" value="Genomic_DNA"/>
</dbReference>
<dbReference type="EMBL" id="X53077">
    <property type="protein sequence ID" value="CAA37247.1"/>
    <property type="status" value="JOINED"/>
    <property type="molecule type" value="Genomic_DNA"/>
</dbReference>
<dbReference type="EMBL" id="X53078">
    <property type="protein sequence ID" value="CAA37247.1"/>
    <property type="status" value="JOINED"/>
    <property type="molecule type" value="Genomic_DNA"/>
</dbReference>
<dbReference type="EMBL" id="X53079">
    <property type="protein sequence ID" value="CAA37247.1"/>
    <property type="status" value="JOINED"/>
    <property type="molecule type" value="Genomic_DNA"/>
</dbReference>
<dbReference type="EMBL" id="X53080">
    <property type="protein sequence ID" value="CAA37247.1"/>
    <property type="status" value="JOINED"/>
    <property type="molecule type" value="Genomic_DNA"/>
</dbReference>
<dbReference type="EMBL" id="S46270">
    <property type="protein sequence ID" value="AAP13884.1"/>
    <property type="molecule type" value="Genomic_DNA"/>
</dbReference>
<dbReference type="PIR" id="S14402">
    <property type="entry name" value="RTHYG"/>
</dbReference>
<dbReference type="SMR" id="P00494"/>
<dbReference type="PaxDb" id="10029-XP_007621351.1"/>
<dbReference type="eggNOG" id="KOG3367">
    <property type="taxonomic scope" value="Eukaryota"/>
</dbReference>
<dbReference type="UniPathway" id="UPA00591">
    <property type="reaction ID" value="UER00648"/>
</dbReference>
<dbReference type="Proteomes" id="UP000694386">
    <property type="component" value="Unplaced"/>
</dbReference>
<dbReference type="Proteomes" id="UP001108280">
    <property type="component" value="Unplaced"/>
</dbReference>
<dbReference type="GO" id="GO:0005737">
    <property type="term" value="C:cytoplasm"/>
    <property type="evidence" value="ECO:0000250"/>
    <property type="project" value="UniProtKB"/>
</dbReference>
<dbReference type="GO" id="GO:0005829">
    <property type="term" value="C:cytosol"/>
    <property type="evidence" value="ECO:0007669"/>
    <property type="project" value="TreeGrafter"/>
</dbReference>
<dbReference type="GO" id="GO:0052657">
    <property type="term" value="F:guanine phosphoribosyltransferase activity"/>
    <property type="evidence" value="ECO:0000250"/>
    <property type="project" value="UniProtKB"/>
</dbReference>
<dbReference type="GO" id="GO:0004422">
    <property type="term" value="F:hypoxanthine phosphoribosyltransferase activity"/>
    <property type="evidence" value="ECO:0000250"/>
    <property type="project" value="UniProtKB"/>
</dbReference>
<dbReference type="GO" id="GO:0042802">
    <property type="term" value="F:identical protein binding"/>
    <property type="evidence" value="ECO:0000250"/>
    <property type="project" value="UniProtKB"/>
</dbReference>
<dbReference type="GO" id="GO:0000287">
    <property type="term" value="F:magnesium ion binding"/>
    <property type="evidence" value="ECO:0000250"/>
    <property type="project" value="UniProtKB"/>
</dbReference>
<dbReference type="GO" id="GO:0000166">
    <property type="term" value="F:nucleotide binding"/>
    <property type="evidence" value="ECO:0007669"/>
    <property type="project" value="UniProtKB-KW"/>
</dbReference>
<dbReference type="GO" id="GO:0046038">
    <property type="term" value="P:GMP catabolic process"/>
    <property type="evidence" value="ECO:0000250"/>
    <property type="project" value="UniProtKB"/>
</dbReference>
<dbReference type="GO" id="GO:0032263">
    <property type="term" value="P:GMP salvage"/>
    <property type="evidence" value="ECO:0007669"/>
    <property type="project" value="TreeGrafter"/>
</dbReference>
<dbReference type="GO" id="GO:0006178">
    <property type="term" value="P:guanine salvage"/>
    <property type="evidence" value="ECO:0000250"/>
    <property type="project" value="UniProtKB"/>
</dbReference>
<dbReference type="GO" id="GO:0046100">
    <property type="term" value="P:hypoxanthine metabolic process"/>
    <property type="evidence" value="ECO:0000250"/>
    <property type="project" value="UniProtKB"/>
</dbReference>
<dbReference type="GO" id="GO:0043103">
    <property type="term" value="P:hypoxanthine salvage"/>
    <property type="evidence" value="ECO:0000250"/>
    <property type="project" value="UniProtKB"/>
</dbReference>
<dbReference type="GO" id="GO:0046040">
    <property type="term" value="P:IMP metabolic process"/>
    <property type="evidence" value="ECO:0000250"/>
    <property type="project" value="UniProtKB"/>
</dbReference>
<dbReference type="GO" id="GO:0032264">
    <property type="term" value="P:IMP salvage"/>
    <property type="evidence" value="ECO:0007669"/>
    <property type="project" value="UniProtKB-UniPathway"/>
</dbReference>
<dbReference type="GO" id="GO:0045964">
    <property type="term" value="P:positive regulation of dopamine metabolic process"/>
    <property type="evidence" value="ECO:0000250"/>
    <property type="project" value="UniProtKB"/>
</dbReference>
<dbReference type="GO" id="GO:0006164">
    <property type="term" value="P:purine nucleotide biosynthetic process"/>
    <property type="evidence" value="ECO:0000250"/>
    <property type="project" value="UniProtKB"/>
</dbReference>
<dbReference type="GO" id="GO:0006166">
    <property type="term" value="P:purine ribonucleoside salvage"/>
    <property type="evidence" value="ECO:0000250"/>
    <property type="project" value="UniProtKB"/>
</dbReference>
<dbReference type="CDD" id="cd06223">
    <property type="entry name" value="PRTases_typeI"/>
    <property type="match status" value="1"/>
</dbReference>
<dbReference type="FunFam" id="3.40.50.2020:FF:000019">
    <property type="entry name" value="Hypoxanthine phosphoribosyltransferase"/>
    <property type="match status" value="1"/>
</dbReference>
<dbReference type="Gene3D" id="3.40.50.2020">
    <property type="match status" value="1"/>
</dbReference>
<dbReference type="InterPro" id="IPR050408">
    <property type="entry name" value="HGPRT"/>
</dbReference>
<dbReference type="InterPro" id="IPR005904">
    <property type="entry name" value="Hxn_phspho_trans"/>
</dbReference>
<dbReference type="InterPro" id="IPR000836">
    <property type="entry name" value="PRibTrfase_dom"/>
</dbReference>
<dbReference type="InterPro" id="IPR029057">
    <property type="entry name" value="PRTase-like"/>
</dbReference>
<dbReference type="NCBIfam" id="TIGR01203">
    <property type="entry name" value="HGPRTase"/>
    <property type="match status" value="1"/>
</dbReference>
<dbReference type="PANTHER" id="PTHR43340">
    <property type="entry name" value="HYPOXANTHINE-GUANINE PHOSPHORIBOSYLTRANSFERASE"/>
    <property type="match status" value="1"/>
</dbReference>
<dbReference type="PANTHER" id="PTHR43340:SF6">
    <property type="entry name" value="HYPOXANTHINE-GUANINE PHOSPHORIBOSYLTRANSFERASE"/>
    <property type="match status" value="1"/>
</dbReference>
<dbReference type="Pfam" id="PF00156">
    <property type="entry name" value="Pribosyltran"/>
    <property type="match status" value="1"/>
</dbReference>
<dbReference type="SUPFAM" id="SSF53271">
    <property type="entry name" value="PRTase-like"/>
    <property type="match status" value="1"/>
</dbReference>
<dbReference type="PROSITE" id="PS00103">
    <property type="entry name" value="PUR_PYR_PR_TRANSFER"/>
    <property type="match status" value="1"/>
</dbReference>
<evidence type="ECO:0000250" key="1"/>
<evidence type="ECO:0000250" key="2">
    <source>
        <dbReference type="UniProtKB" id="P00492"/>
    </source>
</evidence>
<evidence type="ECO:0000250" key="3">
    <source>
        <dbReference type="UniProtKB" id="P00493"/>
    </source>
</evidence>
<evidence type="ECO:0000250" key="4">
    <source>
        <dbReference type="UniProtKB" id="P27605"/>
    </source>
</evidence>
<evidence type="ECO:0000305" key="5"/>
<keyword id="KW-0007">Acetylation</keyword>
<keyword id="KW-0963">Cytoplasm</keyword>
<keyword id="KW-0328">Glycosyltransferase</keyword>
<keyword id="KW-1017">Isopeptide bond</keyword>
<keyword id="KW-0460">Magnesium</keyword>
<keyword id="KW-0479">Metal-binding</keyword>
<keyword id="KW-0547">Nucleotide-binding</keyword>
<keyword id="KW-0597">Phosphoprotein</keyword>
<keyword id="KW-0660">Purine salvage</keyword>
<keyword id="KW-0808">Transferase</keyword>
<keyword id="KW-0832">Ubl conjugation</keyword>
<gene>
    <name type="primary">HPRT1</name>
    <name type="synonym">HPRT</name>
</gene>
<organism>
    <name type="scientific">Cricetulus griseus</name>
    <name type="common">Chinese hamster</name>
    <name type="synonym">Cricetulus barabensis griseus</name>
    <dbReference type="NCBI Taxonomy" id="10029"/>
    <lineage>
        <taxon>Eukaryota</taxon>
        <taxon>Metazoa</taxon>
        <taxon>Chordata</taxon>
        <taxon>Craniata</taxon>
        <taxon>Vertebrata</taxon>
        <taxon>Euteleostomi</taxon>
        <taxon>Mammalia</taxon>
        <taxon>Eutheria</taxon>
        <taxon>Euarchontoglires</taxon>
        <taxon>Glires</taxon>
        <taxon>Rodentia</taxon>
        <taxon>Myomorpha</taxon>
        <taxon>Muroidea</taxon>
        <taxon>Cricetidae</taxon>
        <taxon>Cricetinae</taxon>
        <taxon>Cricetulus</taxon>
    </lineage>
</organism>
<protein>
    <recommendedName>
        <fullName>Hypoxanthine-guanine phosphoribosyltransferase</fullName>
        <shortName>HGPRT</shortName>
        <shortName>HGPRTase</shortName>
        <ecNumber evidence="2">2.4.2.8</ecNumber>
    </recommendedName>
</protein>
<comment type="function">
    <text evidence="1">Converts guanine to guanosine monophosphate, and hypoxanthine to inosine monophosphate. Transfers the 5-phosphoribosyl group from 5-phosphoribosylpyrophosphate onto the purine. Plays a central role in the generation of purine nucleotides through the purine salvage pathway (By similarity).</text>
</comment>
<comment type="catalytic activity">
    <reaction evidence="2">
        <text>IMP + diphosphate = hypoxanthine + 5-phospho-alpha-D-ribose 1-diphosphate</text>
        <dbReference type="Rhea" id="RHEA:17973"/>
        <dbReference type="ChEBI" id="CHEBI:17368"/>
        <dbReference type="ChEBI" id="CHEBI:33019"/>
        <dbReference type="ChEBI" id="CHEBI:58017"/>
        <dbReference type="ChEBI" id="CHEBI:58053"/>
        <dbReference type="EC" id="2.4.2.8"/>
    </reaction>
    <physiologicalReaction direction="right-to-left" evidence="2">
        <dbReference type="Rhea" id="RHEA:17975"/>
    </physiologicalReaction>
</comment>
<comment type="catalytic activity">
    <reaction evidence="2">
        <text>GMP + diphosphate = guanine + 5-phospho-alpha-D-ribose 1-diphosphate</text>
        <dbReference type="Rhea" id="RHEA:25424"/>
        <dbReference type="ChEBI" id="CHEBI:16235"/>
        <dbReference type="ChEBI" id="CHEBI:33019"/>
        <dbReference type="ChEBI" id="CHEBI:58017"/>
        <dbReference type="ChEBI" id="CHEBI:58115"/>
        <dbReference type="EC" id="2.4.2.8"/>
    </reaction>
    <physiologicalReaction direction="right-to-left" evidence="2">
        <dbReference type="Rhea" id="RHEA:25426"/>
    </physiologicalReaction>
</comment>
<comment type="cofactor">
    <cofactor evidence="1">
        <name>Mg(2+)</name>
        <dbReference type="ChEBI" id="CHEBI:18420"/>
    </cofactor>
    <text evidence="1">Binds 2 magnesium ions per subunit. The magnesium ions are essentially bound to the substrate and have few direct interactions with the protein.</text>
</comment>
<comment type="pathway">
    <text>Purine metabolism; IMP biosynthesis via salvage pathway; IMP from hypoxanthine: step 1/1.</text>
</comment>
<comment type="subunit">
    <text evidence="1">Homotetramer.</text>
</comment>
<comment type="subcellular location">
    <subcellularLocation>
        <location>Cytoplasm</location>
    </subcellularLocation>
</comment>
<comment type="miscellaneous">
    <text>The cell lines from which this sequence was cloned are revertants from mutants with no detectable enzyme activity. The phenotypic reversions are the result of overproduction of variant enzymes because of gene amplification. This variant sequence is expected to be very similar to the wild-type.</text>
</comment>
<comment type="similarity">
    <text evidence="5">Belongs to the purine/pyrimidine phosphoribosyltransferase family.</text>
</comment>
<reference key="1">
    <citation type="journal article" date="1982" name="Nucleic Acids Res.">
        <title>Hypoxanthine-guanine phosphoribosyltransferase genes of mouse and Chinese hamster: construction and sequence analysis of cDNA recombinants.</title>
        <authorList>
            <person name="Konecki D.S."/>
            <person name="Brennand J."/>
            <person name="Fuscoe J.C."/>
            <person name="Caskey C.T."/>
            <person name="Chinault A.C."/>
        </authorList>
    </citation>
    <scope>NUCLEOTIDE SEQUENCE [MRNA]</scope>
</reference>
<reference key="2">
    <citation type="journal article" date="1991" name="Genomics">
        <title>The Chinese hamster HPRT gene: restriction map, sequence analysis, and multiplex PCR deletion screen.</title>
        <authorList>
            <person name="Rossiter B.J.F."/>
            <person name="Fuscoe J.C."/>
            <person name="Muzny D.M."/>
            <person name="Fox M."/>
            <person name="Caskey C.T."/>
        </authorList>
    </citation>
    <scope>NUCLEOTIDE SEQUENCE [GENOMIC DNA]</scope>
</reference>
<reference key="3">
    <citation type="journal article" date="1992" name="Mutat. Res.">
        <title>Analysis of X-ray-induced HPRT mutations in CHO cells: insertion and deletions.</title>
        <authorList>
            <person name="Fuscoe J.C."/>
            <person name="Zimmerman L.J."/>
            <person name="Fekete A."/>
            <person name="Setzer R.W."/>
            <person name="Rossiter B.J."/>
        </authorList>
    </citation>
    <scope>NUCLEOTIDE SEQUENCE [GENOMIC DNA] OF 32-42</scope>
</reference>
<feature type="initiator methionine" description="Removed" evidence="2">
    <location>
        <position position="1"/>
    </location>
</feature>
<feature type="chain" id="PRO_0000139584" description="Hypoxanthine-guanine phosphoribosyltransferase">
    <location>
        <begin position="2"/>
        <end position="218"/>
    </location>
</feature>
<feature type="active site" description="Proton acceptor" evidence="1">
    <location>
        <position position="138"/>
    </location>
</feature>
<feature type="binding site" evidence="1">
    <location>
        <position position="69"/>
    </location>
    <ligand>
        <name>GMP</name>
        <dbReference type="ChEBI" id="CHEBI:58115"/>
    </ligand>
</feature>
<feature type="binding site" evidence="1">
    <location>
        <begin position="134"/>
        <end position="142"/>
    </location>
    <ligand>
        <name>GMP</name>
        <dbReference type="ChEBI" id="CHEBI:58115"/>
    </ligand>
</feature>
<feature type="binding site" evidence="1">
    <location>
        <position position="166"/>
    </location>
    <ligand>
        <name>GMP</name>
        <dbReference type="ChEBI" id="CHEBI:58115"/>
    </ligand>
</feature>
<feature type="binding site" evidence="1">
    <location>
        <begin position="186"/>
        <end position="188"/>
    </location>
    <ligand>
        <name>GMP</name>
        <dbReference type="ChEBI" id="CHEBI:58115"/>
    </ligand>
</feature>
<feature type="binding site" evidence="1">
    <location>
        <position position="194"/>
    </location>
    <ligand>
        <name>GMP</name>
        <dbReference type="ChEBI" id="CHEBI:58115"/>
    </ligand>
</feature>
<feature type="binding site" evidence="1">
    <location>
        <position position="194"/>
    </location>
    <ligand>
        <name>Mg(2+)</name>
        <dbReference type="ChEBI" id="CHEBI:18420"/>
    </ligand>
</feature>
<feature type="modified residue" description="N-acetylalanine" evidence="2">
    <location>
        <position position="2"/>
    </location>
</feature>
<feature type="modified residue" description="N6-acetyllysine" evidence="3">
    <location>
        <position position="103"/>
    </location>
</feature>
<feature type="modified residue" description="Phosphothreonine" evidence="4">
    <location>
        <position position="142"/>
    </location>
</feature>
<feature type="cross-link" description="Glycyl lysine isopeptide (Lys-Gly) (interchain with G-Cter in SUMO1); alternate" evidence="2">
    <location>
        <position position="115"/>
    </location>
</feature>
<feature type="cross-link" description="Glycyl lysine isopeptide (Lys-Gly) (interchain with G-Cter in SUMO2); alternate" evidence="2">
    <location>
        <position position="115"/>
    </location>
</feature>
<feature type="sequence conflict" description="In Ref. 3; AAP13884." evidence="5" ref="3">
    <original>L</original>
    <variation>M</variation>
    <location>
        <position position="32"/>
    </location>
</feature>
<accession>P00494</accession>
<accession>Q80XX0</accession>
<name>HPRT_CRIGR</name>
<sequence>MATRSPSVVISDDEPGYDLDLFCIPNHYVEDLEKVFIPHGVIMDRTERLARDVMKEMGGHHIVALCVLKGGYKFFADLLDYIKALNRNSDRSIPMTVDFIRLKSYCNDQSTGDIKVIGGDDLSTLTGKNVLIVEDIIDTGKTMQTLLSLVKRYNLKMVKVASLLVKRTSRSVGYRPDFVGFEIPDKFVVGYALDYNEYFRDLNHICVISETGKAKYKA</sequence>